<dbReference type="EMBL" id="CP001363">
    <property type="protein sequence ID" value="ACY89662.1"/>
    <property type="molecule type" value="Genomic_DNA"/>
</dbReference>
<dbReference type="RefSeq" id="WP_001168374.1">
    <property type="nucleotide sequence ID" value="NZ_CP043402.1"/>
</dbReference>
<dbReference type="SMR" id="D0ZSY8"/>
<dbReference type="KEGG" id="seo:STM14_3233"/>
<dbReference type="PATRIC" id="fig|588858.6.peg.3000"/>
<dbReference type="HOGENOM" id="CLU_108851_1_0_6"/>
<dbReference type="BioCyc" id="SENT588858:STM14_RS14450-MONOMER"/>
<dbReference type="Proteomes" id="UP000002695">
    <property type="component" value="Chromosome"/>
</dbReference>
<dbReference type="GO" id="GO:0005886">
    <property type="term" value="C:plasma membrane"/>
    <property type="evidence" value="ECO:0007669"/>
    <property type="project" value="UniProtKB-SubCell"/>
</dbReference>
<dbReference type="GO" id="GO:0016989">
    <property type="term" value="F:sigma factor antagonist activity"/>
    <property type="evidence" value="ECO:0007669"/>
    <property type="project" value="InterPro"/>
</dbReference>
<dbReference type="GO" id="GO:0097533">
    <property type="term" value="P:cellular stress response to acid chemical"/>
    <property type="evidence" value="ECO:0000315"/>
    <property type="project" value="UniProtKB"/>
</dbReference>
<dbReference type="CDD" id="cd16328">
    <property type="entry name" value="RseA_N"/>
    <property type="match status" value="1"/>
</dbReference>
<dbReference type="FunFam" id="1.10.10.880:FF:000001">
    <property type="entry name" value="Anti-sigma-E factor RseA"/>
    <property type="match status" value="1"/>
</dbReference>
<dbReference type="FunFam" id="1.20.5.3960:FF:000001">
    <property type="entry name" value="Anti-sigma-E factor RseA"/>
    <property type="match status" value="1"/>
</dbReference>
<dbReference type="Gene3D" id="1.20.5.3960">
    <property type="match status" value="1"/>
</dbReference>
<dbReference type="Gene3D" id="1.10.10.880">
    <property type="entry name" value="Anti sigma-E protein RseA, N-terminal domain"/>
    <property type="match status" value="1"/>
</dbReference>
<dbReference type="InterPro" id="IPR052383">
    <property type="entry name" value="Anti-sigma-E_RseA-like"/>
</dbReference>
<dbReference type="InterPro" id="IPR005573">
    <property type="entry name" value="Anti-sigma_E_RseA_C"/>
</dbReference>
<dbReference type="InterPro" id="IPR005572">
    <property type="entry name" value="Anti-sigma_E_RseA_N"/>
</dbReference>
<dbReference type="InterPro" id="IPR036147">
    <property type="entry name" value="Anti-sigma_E_RseA_N_sf"/>
</dbReference>
<dbReference type="InterPro" id="IPR026279">
    <property type="entry name" value="RseA"/>
</dbReference>
<dbReference type="NCBIfam" id="NF008116">
    <property type="entry name" value="PRK10863.1"/>
    <property type="match status" value="1"/>
</dbReference>
<dbReference type="PANTHER" id="PTHR38104">
    <property type="match status" value="1"/>
</dbReference>
<dbReference type="PANTHER" id="PTHR38104:SF1">
    <property type="entry name" value="ANTI-SIGMA-E FACTOR RSEA"/>
    <property type="match status" value="1"/>
</dbReference>
<dbReference type="Pfam" id="PF03873">
    <property type="entry name" value="RseA_C"/>
    <property type="match status" value="1"/>
</dbReference>
<dbReference type="Pfam" id="PF03872">
    <property type="entry name" value="RseA_N"/>
    <property type="match status" value="1"/>
</dbReference>
<dbReference type="PIRSF" id="PIRSF016938">
    <property type="entry name" value="RseA"/>
    <property type="match status" value="1"/>
</dbReference>
<dbReference type="SUPFAM" id="SSF89069">
    <property type="entry name" value="N-terminal, cytoplasmic domain of anti-sigmaE factor RseA"/>
    <property type="match status" value="1"/>
</dbReference>
<name>RSEA_SALT1</name>
<gene>
    <name type="primary">rseA</name>
    <name type="ordered locus">STM14_3233</name>
</gene>
<feature type="chain" id="PRO_0000424884" description="Anti-sigma-E factor RseA">
    <location>
        <begin position="1"/>
        <end position="216"/>
    </location>
</feature>
<feature type="topological domain" description="Cytoplasmic" evidence="2">
    <location>
        <begin position="1"/>
        <end position="104"/>
    </location>
</feature>
<feature type="transmembrane region" description="Helical; Signal-anchor for type II membrane protein" evidence="2">
    <location>
        <begin position="105"/>
        <end position="121"/>
    </location>
</feature>
<feature type="topological domain" description="Periplasmic" evidence="2">
    <location>
        <begin position="122"/>
        <end position="216"/>
    </location>
</feature>
<feature type="region of interest" description="Disordered" evidence="3">
    <location>
        <begin position="147"/>
        <end position="166"/>
    </location>
</feature>
<feature type="coiled-coil region" evidence="2">
    <location>
        <begin position="161"/>
        <end position="202"/>
    </location>
</feature>
<feature type="site" description="Cleavage; by RseP" evidence="1">
    <location>
        <begin position="108"/>
        <end position="109"/>
    </location>
</feature>
<feature type="site" description="Cleavage; by DegS" evidence="1">
    <location>
        <begin position="148"/>
        <end position="149"/>
    </location>
</feature>
<keyword id="KW-0997">Cell inner membrane</keyword>
<keyword id="KW-1003">Cell membrane</keyword>
<keyword id="KW-0175">Coiled coil</keyword>
<keyword id="KW-0472">Membrane</keyword>
<keyword id="KW-0735">Signal-anchor</keyword>
<keyword id="KW-0812">Transmembrane</keyword>
<keyword id="KW-1133">Transmembrane helix</keyword>
<protein>
    <recommendedName>
        <fullName>Anti-sigma-E factor RseA</fullName>
    </recommendedName>
    <alternativeName>
        <fullName>Regulator of SigE</fullName>
    </alternativeName>
    <alternativeName>
        <fullName>Sigma-E anti-sigma factor RseA</fullName>
    </alternativeName>
    <alternativeName>
        <fullName>Sigma-E factor negative regulatory protein</fullName>
    </alternativeName>
</protein>
<accession>D0ZSY8</accession>
<sequence>MQKEKLSALMDGETLDSELLKALTHDPEMQKTWESYHLIRDSMRGDTPDVLHFDISARVMAAIENEPVRQVSPLIPEAQPAPQQWQKMPFWKKVRPWAAQLTQMGVAACVSLAVIVGVQHYNGQSETSQQPETPVFNTLPMMGKASPVSLGVPSEAAPVGSQQQQVQEQRRRINAMLQDYELQRRLHSEQLQFEQAQTQQAAVQVPGIQTLGTQSQ</sequence>
<organism>
    <name type="scientific">Salmonella typhimurium (strain 14028s / SGSC 2262)</name>
    <dbReference type="NCBI Taxonomy" id="588858"/>
    <lineage>
        <taxon>Bacteria</taxon>
        <taxon>Pseudomonadati</taxon>
        <taxon>Pseudomonadota</taxon>
        <taxon>Gammaproteobacteria</taxon>
        <taxon>Enterobacterales</taxon>
        <taxon>Enterobacteriaceae</taxon>
        <taxon>Salmonella</taxon>
    </lineage>
</organism>
<proteinExistence type="evidence at protein level"/>
<comment type="function">
    <text evidence="4 5">An anti-sigma factor for extracytoplasmic function (ECF) sigma factor sigma-E (RpoE). ECF sigma factors are held in an inactive form by an anti-sigma factor until released by regulated intramembrane proteolysis (RIP). RIP occurs when an extracytoplasmic signal (periplasmic or acid stress or heat shock) triggers a concerted proteolytic cascade to transmit information and elicit cellular responses. The membrane-spanning regulatory substrate protein is first cut periplasmically (site-1 protease, S1P, DegS), then within the membrane itself (site-2 protease, S2P, RseP), while cytoplasmic proteases finish degrading the anti-sigma factor, liberating sigma-E (Probable). In this organism acid stress response does not require DegS degradation.</text>
</comment>
<comment type="activity regulation">
    <text evidence="4">Responds differently to heat shock versus acid shock; degradation in response to heat shock requires sequential DegS and RseP action, whereas degradation in response to acid shock requires only RseP.</text>
</comment>
<comment type="subunit">
    <text evidence="1">Interacts 1:1 with ECF RNA polymerase sigma-E (RpoE); this inhibits the interaction of sigma-E with the RNA polymerase catalytic core and leads to a decreased expression of sigma-E-regulated genes. Interacts with RseB (By similarity).</text>
</comment>
<comment type="subcellular location">
    <subcellularLocation>
        <location evidence="1">Cell inner membrane</location>
        <topology evidence="1">Single-pass type II membrane protein</topology>
    </subcellularLocation>
</comment>
<comment type="PTM">
    <text evidence="5">Sequentially cleaved by DegS (a site-1 protease) in its periplasmic domain between Val-148 and Ser-149, then by RseP (a site-2 protease) between positions Ala-108 and Cys-109. The N-terminal fragment is then degraded by primarily ClpX-ClpP in an ATP-dependent fashion. Sequential cleavage by DegS, RseP and ClpX-ClpP frees RpoE from RseA (Probable).</text>
</comment>
<comment type="disruption phenotype">
    <text evidence="4">Derepression and constitutive activation of sigma-E function, consequently loss of acid stress response.</text>
</comment>
<comment type="similarity">
    <text evidence="5">Belongs to the RseA family.</text>
</comment>
<evidence type="ECO:0000250" key="1"/>
<evidence type="ECO:0000255" key="2"/>
<evidence type="ECO:0000256" key="3">
    <source>
        <dbReference type="SAM" id="MobiDB-lite"/>
    </source>
</evidence>
<evidence type="ECO:0000269" key="4">
    <source>
    </source>
</evidence>
<evidence type="ECO:0000305" key="5"/>
<reference key="1">
    <citation type="journal article" date="2010" name="J. Bacteriol.">
        <title>Short-term signatures of evolutionary change in the Salmonella enterica serovar typhimurium 14028 genome.</title>
        <authorList>
            <person name="Jarvik T."/>
            <person name="Smillie C."/>
            <person name="Groisman E.A."/>
            <person name="Ochman H."/>
        </authorList>
    </citation>
    <scope>NUCLEOTIDE SEQUENCE [LARGE SCALE GENOMIC DNA]</scope>
    <source>
        <strain>14028s / SGSC 2262</strain>
    </source>
</reference>
<reference key="2">
    <citation type="journal article" date="2009" name="Mol. Microbiol.">
        <title>Acid stress activation of the sigma(E) stress response in Salmonella enterica serovar Typhimurium.</title>
        <authorList>
            <person name="Muller C."/>
            <person name="Bang I.S."/>
            <person name="Velayudhan J."/>
            <person name="Karlinsey J."/>
            <person name="Papenfort K."/>
            <person name="Vogel J."/>
            <person name="Fang F.C."/>
        </authorList>
    </citation>
    <scope>ACTIVITY REGULATION</scope>
    <scope>PROBABLE CLEAVAGE BY DEGS AND RSEP</scope>
    <scope>DISRUPTION PHENOTYPE</scope>
    <scope>FUNCTION</scope>
    <source>
        <strain>14028s / SGSC 2262</strain>
    </source>
</reference>